<organism>
    <name type="scientific">Escherichia coli O157:H7</name>
    <dbReference type="NCBI Taxonomy" id="83334"/>
    <lineage>
        <taxon>Bacteria</taxon>
        <taxon>Pseudomonadati</taxon>
        <taxon>Pseudomonadota</taxon>
        <taxon>Gammaproteobacteria</taxon>
        <taxon>Enterobacterales</taxon>
        <taxon>Enterobacteriaceae</taxon>
        <taxon>Escherichia</taxon>
    </lineage>
</organism>
<sequence>MHFRAITRIVGLLVILFSGTMIIPGLVALIYRDGAGRAFTQTFFVALAIGSMLWWPNRKEKGELKSREGFLIVVLFWTVLGSVGALPFIFSESPNLTITDAFFESFSGLTTTGATTLVGLDSLPHAILFYRQMLQWFGGMGIIVLAVAILPILGVGGMQLYRAEMPGPLKDNKMRPRIAETAKTLWLIYVLLTVACALALWFAGMDAFDAIGHSFATIAIGGFSTHDASIGYFDSPTINTIIAIFLLISGCNYGLHFSLLSGRSLKVYWRDPEFRMFIGVQFTLVVICTLVLWFHNVYSSALMTINQAFFQVVSMATTAGFTTDSIARWPLFLPVLLLCSAFIGGCAGSTGGGLKVIRILLLFKQGNRELKRLVHPNAVYSIKLGNRALPERILEAVWGFFSAYALVFIVSMLAIIATGVDDFSAFASVVATLNNLGPGLGVVADNFTSMNPVAKWILIANMLFGRLEVFTLLVLFTPTFWRE</sequence>
<proteinExistence type="inferred from homology"/>
<reference key="1">
    <citation type="journal article" date="2001" name="Nature">
        <title>Genome sequence of enterohaemorrhagic Escherichia coli O157:H7.</title>
        <authorList>
            <person name="Perna N.T."/>
            <person name="Plunkett G. III"/>
            <person name="Burland V."/>
            <person name="Mau B."/>
            <person name="Glasner J.D."/>
            <person name="Rose D.J."/>
            <person name="Mayhew G.F."/>
            <person name="Evans P.S."/>
            <person name="Gregor J."/>
            <person name="Kirkpatrick H.A."/>
            <person name="Posfai G."/>
            <person name="Hackett J."/>
            <person name="Klink S."/>
            <person name="Boutin A."/>
            <person name="Shao Y."/>
            <person name="Miller L."/>
            <person name="Grotbeck E.J."/>
            <person name="Davis N.W."/>
            <person name="Lim A."/>
            <person name="Dimalanta E.T."/>
            <person name="Potamousis K."/>
            <person name="Apodaca J."/>
            <person name="Anantharaman T.S."/>
            <person name="Lin J."/>
            <person name="Yen G."/>
            <person name="Schwartz D.C."/>
            <person name="Welch R.A."/>
            <person name="Blattner F.R."/>
        </authorList>
    </citation>
    <scope>NUCLEOTIDE SEQUENCE [LARGE SCALE GENOMIC DNA]</scope>
    <source>
        <strain>O157:H7 / EDL933 / ATCC 700927 / EHEC</strain>
    </source>
</reference>
<reference key="2">
    <citation type="journal article" date="2001" name="DNA Res.">
        <title>Complete genome sequence of enterohemorrhagic Escherichia coli O157:H7 and genomic comparison with a laboratory strain K-12.</title>
        <authorList>
            <person name="Hayashi T."/>
            <person name="Makino K."/>
            <person name="Ohnishi M."/>
            <person name="Kurokawa K."/>
            <person name="Ishii K."/>
            <person name="Yokoyama K."/>
            <person name="Han C.-G."/>
            <person name="Ohtsubo E."/>
            <person name="Nakayama K."/>
            <person name="Murata T."/>
            <person name="Tanaka M."/>
            <person name="Tobe T."/>
            <person name="Iida T."/>
            <person name="Takami H."/>
            <person name="Honda T."/>
            <person name="Sasakawa C."/>
            <person name="Ogasawara N."/>
            <person name="Yasunaga T."/>
            <person name="Kuhara S."/>
            <person name="Shiba T."/>
            <person name="Hattori M."/>
            <person name="Shinagawa H."/>
        </authorList>
    </citation>
    <scope>NUCLEOTIDE SEQUENCE [LARGE SCALE GENOMIC DNA]</scope>
    <source>
        <strain>O157:H7 / Sakai / RIMD 0509952 / EHEC</strain>
    </source>
</reference>
<comment type="function">
    <text evidence="1">Low-affinity potassium transport system. Interacts with Trk system potassium uptake protein TrkA and requires TrkE for transport activity (By similarity).</text>
</comment>
<comment type="subcellular location">
    <subcellularLocation>
        <location evidence="1">Cell inner membrane</location>
        <topology evidence="1">Multi-pass membrane protein</topology>
    </subcellularLocation>
</comment>
<comment type="similarity">
    <text evidence="3">Belongs to the TrkH potassium transport family.</text>
</comment>
<dbReference type="EMBL" id="AE005174">
    <property type="protein sequence ID" value="AAG59043.1"/>
    <property type="molecule type" value="Genomic_DNA"/>
</dbReference>
<dbReference type="EMBL" id="BA000007">
    <property type="protein sequence ID" value="BAB38200.1"/>
    <property type="molecule type" value="Genomic_DNA"/>
</dbReference>
<dbReference type="PIR" id="A91226">
    <property type="entry name" value="A91226"/>
</dbReference>
<dbReference type="PIR" id="G86072">
    <property type="entry name" value="G86072"/>
</dbReference>
<dbReference type="RefSeq" id="NP_312804.1">
    <property type="nucleotide sequence ID" value="NC_002695.1"/>
</dbReference>
<dbReference type="RefSeq" id="WP_000545677.1">
    <property type="nucleotide sequence ID" value="NZ_VOAI01000017.1"/>
</dbReference>
<dbReference type="SMR" id="P0AFZ8"/>
<dbReference type="STRING" id="155864.Z5371"/>
<dbReference type="GeneID" id="915125"/>
<dbReference type="GeneID" id="93778088"/>
<dbReference type="KEGG" id="ece:Z5371"/>
<dbReference type="KEGG" id="ecs:ECs_4777"/>
<dbReference type="PATRIC" id="fig|386585.9.peg.4986"/>
<dbReference type="eggNOG" id="COG0168">
    <property type="taxonomic scope" value="Bacteria"/>
</dbReference>
<dbReference type="HOGENOM" id="CLU_030708_0_2_6"/>
<dbReference type="OMA" id="LQWMGGM"/>
<dbReference type="Proteomes" id="UP000000558">
    <property type="component" value="Chromosome"/>
</dbReference>
<dbReference type="Proteomes" id="UP000002519">
    <property type="component" value="Chromosome"/>
</dbReference>
<dbReference type="GO" id="GO:0005886">
    <property type="term" value="C:plasma membrane"/>
    <property type="evidence" value="ECO:0007669"/>
    <property type="project" value="UniProtKB-SubCell"/>
</dbReference>
<dbReference type="GO" id="GO:0005267">
    <property type="term" value="F:potassium channel activity"/>
    <property type="evidence" value="ECO:0000250"/>
    <property type="project" value="UniProtKB"/>
</dbReference>
<dbReference type="GO" id="GO:0030955">
    <property type="term" value="F:potassium ion binding"/>
    <property type="evidence" value="ECO:0000250"/>
    <property type="project" value="UniProtKB"/>
</dbReference>
<dbReference type="GO" id="GO:0015379">
    <property type="term" value="F:potassium:chloride symporter activity"/>
    <property type="evidence" value="ECO:0007669"/>
    <property type="project" value="InterPro"/>
</dbReference>
<dbReference type="GO" id="GO:0071805">
    <property type="term" value="P:potassium ion transmembrane transport"/>
    <property type="evidence" value="ECO:0000250"/>
    <property type="project" value="UniProtKB"/>
</dbReference>
<dbReference type="InterPro" id="IPR003445">
    <property type="entry name" value="Cat_transpt"/>
</dbReference>
<dbReference type="InterPro" id="IPR004772">
    <property type="entry name" value="TrkH"/>
</dbReference>
<dbReference type="NCBIfam" id="TIGR00933">
    <property type="entry name" value="2a38"/>
    <property type="match status" value="1"/>
</dbReference>
<dbReference type="NCBIfam" id="NF008020">
    <property type="entry name" value="PRK10750.1"/>
    <property type="match status" value="1"/>
</dbReference>
<dbReference type="PANTHER" id="PTHR32024">
    <property type="entry name" value="TRK SYSTEM POTASSIUM UPTAKE PROTEIN TRKG-RELATED"/>
    <property type="match status" value="1"/>
</dbReference>
<dbReference type="PANTHER" id="PTHR32024:SF2">
    <property type="entry name" value="TRK SYSTEM POTASSIUM UPTAKE PROTEIN TRKG-RELATED"/>
    <property type="match status" value="1"/>
</dbReference>
<dbReference type="Pfam" id="PF02386">
    <property type="entry name" value="TrkH"/>
    <property type="match status" value="1"/>
</dbReference>
<dbReference type="PIRSF" id="PIRSF006247">
    <property type="entry name" value="TrkH"/>
    <property type="match status" value="1"/>
</dbReference>
<evidence type="ECO:0000250" key="1"/>
<evidence type="ECO:0000250" key="2">
    <source>
        <dbReference type="UniProtKB" id="Q87TN7"/>
    </source>
</evidence>
<evidence type="ECO:0000305" key="3"/>
<accession>P0AFZ8</accession>
<accession>P21166</accession>
<accession>P76769</accession>
<feature type="chain" id="PRO_0000070476" description="Trk system potassium uptake protein TrkH">
    <location>
        <begin position="1"/>
        <end position="483"/>
    </location>
</feature>
<feature type="topological domain" description="Cytoplasmic" evidence="1">
    <location>
        <begin position="1"/>
        <end position="2"/>
    </location>
</feature>
<feature type="transmembrane region" description="Helical" evidence="1">
    <location>
        <begin position="3"/>
        <end position="29"/>
    </location>
</feature>
<feature type="topological domain" description="Periplasmic" evidence="1">
    <location>
        <begin position="30"/>
        <end position="35"/>
    </location>
</feature>
<feature type="transmembrane region" description="Helical" evidence="1">
    <location>
        <begin position="36"/>
        <end position="57"/>
    </location>
</feature>
<feature type="topological domain" description="Cytoplasmic" evidence="1">
    <location>
        <begin position="58"/>
        <end position="65"/>
    </location>
</feature>
<feature type="transmembrane region" description="Helical" evidence="1">
    <location>
        <begin position="66"/>
        <end position="90"/>
    </location>
</feature>
<feature type="topological domain" description="Periplasmic" evidence="1">
    <location>
        <begin position="91"/>
        <end status="unknown"/>
    </location>
</feature>
<feature type="intramembrane region" evidence="1">
    <location>
        <begin status="unknown"/>
        <end position="97"/>
    </location>
</feature>
<feature type="intramembrane region" description="Helical; Pore-forming" evidence="1">
    <location>
        <begin position="98"/>
        <end position="109"/>
    </location>
</feature>
<feature type="intramembrane region" evidence="1">
    <location>
        <begin position="110"/>
        <end position="115"/>
    </location>
</feature>
<feature type="topological domain" description="Periplasmic" evidence="1">
    <location>
        <begin position="116"/>
        <end position="124"/>
    </location>
</feature>
<feature type="transmembrane region" description="Helical" evidence="1">
    <location>
        <begin position="125"/>
        <end position="150"/>
    </location>
</feature>
<feature type="topological domain" description="Cytoplasmic" evidence="1">
    <location>
        <begin position="151"/>
        <end position="177"/>
    </location>
</feature>
<feature type="transmembrane region" description="Helical" evidence="1">
    <location>
        <begin position="178"/>
        <end position="202"/>
    </location>
</feature>
<feature type="topological domain" description="Periplasmic" evidence="1">
    <location>
        <begin position="203"/>
        <end position="205"/>
    </location>
</feature>
<feature type="intramembrane region" evidence="1">
    <location>
        <position position="206"/>
    </location>
</feature>
<feature type="intramembrane region" description="Helical; Pore-forming" evidence="1">
    <location>
        <begin position="207"/>
        <end position="218"/>
    </location>
</feature>
<feature type="intramembrane region" evidence="1">
    <location>
        <begin position="219"/>
        <end position="224"/>
    </location>
</feature>
<feature type="topological domain" description="Periplasmic" evidence="1">
    <location>
        <begin position="225"/>
        <end position="234"/>
    </location>
</feature>
<feature type="intramembrane region" description="Helical" evidence="1">
    <location>
        <begin position="235"/>
        <end position="250"/>
    </location>
</feature>
<feature type="intramembrane region" evidence="1">
    <location>
        <begin position="251"/>
        <end status="unknown"/>
    </location>
</feature>
<feature type="topological domain" description="Cytoplasmic" evidence="1">
    <location>
        <begin status="unknown"/>
        <end position="273"/>
    </location>
</feature>
<feature type="transmembrane region" description="Helical" evidence="1">
    <location>
        <begin position="274"/>
        <end position="294"/>
    </location>
</feature>
<feature type="topological domain" description="Periplasmic" evidence="1">
    <location>
        <begin position="295"/>
        <end status="unknown"/>
    </location>
</feature>
<feature type="intramembrane region" evidence="1">
    <location>
        <begin status="unknown"/>
        <end position="300"/>
    </location>
</feature>
<feature type="intramembrane region" description="Helical; Pore-forming" evidence="1">
    <location>
        <begin position="301"/>
        <end position="316"/>
    </location>
</feature>
<feature type="intramembrane region" evidence="1">
    <location>
        <begin position="317"/>
        <end position="322"/>
    </location>
</feature>
<feature type="topological domain" description="Periplasmic" evidence="1">
    <location>
        <begin position="323"/>
        <end position="330"/>
    </location>
</feature>
<feature type="intramembrane region" description="Helical" evidence="1">
    <location>
        <begin position="331"/>
        <end position="342"/>
    </location>
</feature>
<feature type="intramembrane region" description="Note=Loop between two helices" evidence="1">
    <location>
        <begin position="343"/>
        <end position="355"/>
    </location>
</feature>
<feature type="intramembrane region" description="Helical" evidence="1">
    <location>
        <begin position="356"/>
        <end status="unknown"/>
    </location>
</feature>
<feature type="topological domain" description="Cytoplasmic" evidence="1">
    <location>
        <begin status="unknown"/>
        <end position="389"/>
    </location>
</feature>
<feature type="transmembrane region" description="Helical" evidence="1">
    <location>
        <begin position="390"/>
        <end position="417"/>
    </location>
</feature>
<feature type="topological domain" description="Periplasmic" evidence="1">
    <location>
        <begin position="418"/>
        <end position="419"/>
    </location>
</feature>
<feature type="intramembrane region" evidence="1">
    <location>
        <begin position="420"/>
        <end position="421"/>
    </location>
</feature>
<feature type="intramembrane region" description="Helical; Pore-forming" evidence="1">
    <location>
        <begin position="422"/>
        <end position="432"/>
    </location>
</feature>
<feature type="intramembrane region" evidence="1">
    <location>
        <begin position="433"/>
        <end position="439"/>
    </location>
</feature>
<feature type="topological domain" description="Periplasmic" evidence="1">
    <location>
        <begin position="440"/>
        <end position="451"/>
    </location>
</feature>
<feature type="intramembrane region" description="Helical" evidence="1">
    <location>
        <begin position="452"/>
        <end position="463"/>
    </location>
</feature>
<feature type="intramembrane region" evidence="1">
    <location>
        <begin position="464"/>
        <end status="unknown"/>
    </location>
</feature>
<feature type="topological domain" description="Cytoplasmic" evidence="1">
    <location>
        <begin status="unknown"/>
        <end position="483"/>
    </location>
</feature>
<feature type="region of interest" description="Selectivity filter part 1" evidence="1">
    <location>
        <begin position="110"/>
        <end position="115"/>
    </location>
</feature>
<feature type="region of interest" description="Selectivity filter part 2" evidence="1">
    <location>
        <begin position="219"/>
        <end position="224"/>
    </location>
</feature>
<feature type="region of interest" description="Selectivity filter part 3" evidence="1">
    <location>
        <begin position="317"/>
        <end position="322"/>
    </location>
</feature>
<feature type="region of interest" description="Selectivity filter part 4" evidence="1">
    <location>
        <begin position="434"/>
        <end position="439"/>
    </location>
</feature>
<feature type="binding site" evidence="2">
    <location>
        <position position="111"/>
    </location>
    <ligand>
        <name>K(+)</name>
        <dbReference type="ChEBI" id="CHEBI:29103"/>
    </ligand>
</feature>
<feature type="binding site" evidence="2">
    <location>
        <position position="112"/>
    </location>
    <ligand>
        <name>K(+)</name>
        <dbReference type="ChEBI" id="CHEBI:29103"/>
    </ligand>
</feature>
<feature type="binding site" evidence="2">
    <location>
        <position position="220"/>
    </location>
    <ligand>
        <name>K(+)</name>
        <dbReference type="ChEBI" id="CHEBI:29103"/>
    </ligand>
</feature>
<feature type="binding site" evidence="2">
    <location>
        <position position="221"/>
    </location>
    <ligand>
        <name>K(+)</name>
        <dbReference type="ChEBI" id="CHEBI:29103"/>
    </ligand>
</feature>
<feature type="binding site" evidence="2">
    <location>
        <position position="318"/>
    </location>
    <ligand>
        <name>K(+)</name>
        <dbReference type="ChEBI" id="CHEBI:29103"/>
    </ligand>
</feature>
<feature type="binding site" evidence="2">
    <location>
        <position position="319"/>
    </location>
    <ligand>
        <name>K(+)</name>
        <dbReference type="ChEBI" id="CHEBI:29103"/>
    </ligand>
</feature>
<feature type="binding site" evidence="2">
    <location>
        <position position="435"/>
    </location>
    <ligand>
        <name>K(+)</name>
        <dbReference type="ChEBI" id="CHEBI:29103"/>
    </ligand>
</feature>
<feature type="binding site" evidence="2">
    <location>
        <position position="436"/>
    </location>
    <ligand>
        <name>K(+)</name>
        <dbReference type="ChEBI" id="CHEBI:29103"/>
    </ligand>
</feature>
<name>TRKH_ECO57</name>
<keyword id="KW-0997">Cell inner membrane</keyword>
<keyword id="KW-1003">Cell membrane</keyword>
<keyword id="KW-0407">Ion channel</keyword>
<keyword id="KW-0406">Ion transport</keyword>
<keyword id="KW-0472">Membrane</keyword>
<keyword id="KW-0479">Metal-binding</keyword>
<keyword id="KW-0630">Potassium</keyword>
<keyword id="KW-0633">Potassium transport</keyword>
<keyword id="KW-1185">Reference proteome</keyword>
<keyword id="KW-0812">Transmembrane</keyword>
<keyword id="KW-1133">Transmembrane helix</keyword>
<keyword id="KW-0813">Transport</keyword>
<protein>
    <recommendedName>
        <fullName>Trk system potassium uptake protein TrkH</fullName>
    </recommendedName>
</protein>
<gene>
    <name type="primary">trkH</name>
    <name type="ordered locus">Z5371</name>
    <name type="ordered locus">ECs4777</name>
</gene>